<protein>
    <recommendedName>
        <fullName evidence="1">Elongation factor P-like protein</fullName>
    </recommendedName>
</protein>
<feature type="chain" id="PRO_1000147436" description="Elongation factor P-like protein">
    <location>
        <begin position="1"/>
        <end position="190"/>
    </location>
</feature>
<sequence length="190" mass="21533">MPRANEIKKGMVLNYNGKLLLVKDIDIQSPTARGAATLYKMRFSDVRTGLKVEERFKGDDIVDTVTLTRRYVDFSYVDGNEYVFMDKEDYTPYTFTKDQIEEELLFMPEGGMPDMQVLTWDGQLLALELPQTVDLEIVETAPGIKGASASARNKPATLSTGLVIQVPEYLSPGEKIRIHIEERRYMGRAD</sequence>
<reference key="1">
    <citation type="journal article" date="2009" name="PLoS Genet.">
        <title>Organised genome dynamics in the Escherichia coli species results in highly diverse adaptive paths.</title>
        <authorList>
            <person name="Touchon M."/>
            <person name="Hoede C."/>
            <person name="Tenaillon O."/>
            <person name="Barbe V."/>
            <person name="Baeriswyl S."/>
            <person name="Bidet P."/>
            <person name="Bingen E."/>
            <person name="Bonacorsi S."/>
            <person name="Bouchier C."/>
            <person name="Bouvet O."/>
            <person name="Calteau A."/>
            <person name="Chiapello H."/>
            <person name="Clermont O."/>
            <person name="Cruveiller S."/>
            <person name="Danchin A."/>
            <person name="Diard M."/>
            <person name="Dossat C."/>
            <person name="Karoui M.E."/>
            <person name="Frapy E."/>
            <person name="Garry L."/>
            <person name="Ghigo J.M."/>
            <person name="Gilles A.M."/>
            <person name="Johnson J."/>
            <person name="Le Bouguenec C."/>
            <person name="Lescat M."/>
            <person name="Mangenot S."/>
            <person name="Martinez-Jehanne V."/>
            <person name="Matic I."/>
            <person name="Nassif X."/>
            <person name="Oztas S."/>
            <person name="Petit M.A."/>
            <person name="Pichon C."/>
            <person name="Rouy Z."/>
            <person name="Ruf C.S."/>
            <person name="Schneider D."/>
            <person name="Tourret J."/>
            <person name="Vacherie B."/>
            <person name="Vallenet D."/>
            <person name="Medigue C."/>
            <person name="Rocha E.P.C."/>
            <person name="Denamur E."/>
        </authorList>
    </citation>
    <scope>NUCLEOTIDE SEQUENCE [LARGE SCALE GENOMIC DNA]</scope>
    <source>
        <strain>ED1a</strain>
    </source>
</reference>
<accession>B7MXI6</accession>
<evidence type="ECO:0000255" key="1">
    <source>
        <dbReference type="HAMAP-Rule" id="MF_00646"/>
    </source>
</evidence>
<gene>
    <name evidence="1" type="primary">yeiP</name>
    <name type="ordered locus">ECED1_2621</name>
</gene>
<proteinExistence type="inferred from homology"/>
<name>EFPL_ECO81</name>
<comment type="similarity">
    <text evidence="1">Belongs to the elongation factor P family.</text>
</comment>
<dbReference type="EMBL" id="CU928162">
    <property type="protein sequence ID" value="CAR08802.2"/>
    <property type="molecule type" value="Genomic_DNA"/>
</dbReference>
<dbReference type="RefSeq" id="WP_001136827.1">
    <property type="nucleotide sequence ID" value="NC_011745.1"/>
</dbReference>
<dbReference type="SMR" id="B7MXI6"/>
<dbReference type="GeneID" id="93775010"/>
<dbReference type="KEGG" id="ecq:ECED1_2621"/>
<dbReference type="HOGENOM" id="CLU_074944_2_0_6"/>
<dbReference type="Proteomes" id="UP000000748">
    <property type="component" value="Chromosome"/>
</dbReference>
<dbReference type="GO" id="GO:0005829">
    <property type="term" value="C:cytosol"/>
    <property type="evidence" value="ECO:0007669"/>
    <property type="project" value="UniProtKB-ARBA"/>
</dbReference>
<dbReference type="GO" id="GO:0003746">
    <property type="term" value="F:translation elongation factor activity"/>
    <property type="evidence" value="ECO:0007669"/>
    <property type="project" value="UniProtKB-UniRule"/>
</dbReference>
<dbReference type="GO" id="GO:0043043">
    <property type="term" value="P:peptide biosynthetic process"/>
    <property type="evidence" value="ECO:0007669"/>
    <property type="project" value="InterPro"/>
</dbReference>
<dbReference type="CDD" id="cd04470">
    <property type="entry name" value="S1_EF-P_repeat_1"/>
    <property type="match status" value="1"/>
</dbReference>
<dbReference type="CDD" id="cd05794">
    <property type="entry name" value="S1_EF-P_repeat_2"/>
    <property type="match status" value="1"/>
</dbReference>
<dbReference type="FunFam" id="2.40.50.140:FF:000004">
    <property type="entry name" value="Elongation factor P"/>
    <property type="match status" value="1"/>
</dbReference>
<dbReference type="FunFam" id="2.30.30.30:FF:000011">
    <property type="entry name" value="Elongation factor P-like protein"/>
    <property type="match status" value="1"/>
</dbReference>
<dbReference type="FunFam" id="2.40.50.140:FF:000053">
    <property type="entry name" value="Elongation factor P-like protein"/>
    <property type="match status" value="1"/>
</dbReference>
<dbReference type="Gene3D" id="2.30.30.30">
    <property type="match status" value="1"/>
</dbReference>
<dbReference type="Gene3D" id="2.40.50.140">
    <property type="entry name" value="Nucleic acid-binding proteins"/>
    <property type="match status" value="2"/>
</dbReference>
<dbReference type="HAMAP" id="MF_00646">
    <property type="entry name" value="EFP"/>
    <property type="match status" value="1"/>
</dbReference>
<dbReference type="InterPro" id="IPR015365">
    <property type="entry name" value="Elong-fact-P_C"/>
</dbReference>
<dbReference type="InterPro" id="IPR012340">
    <property type="entry name" value="NA-bd_OB-fold"/>
</dbReference>
<dbReference type="InterPro" id="IPR014722">
    <property type="entry name" value="Rib_uL2_dom2"/>
</dbReference>
<dbReference type="InterPro" id="IPR020599">
    <property type="entry name" value="Transl_elong_fac_P/YeiP"/>
</dbReference>
<dbReference type="InterPro" id="IPR013185">
    <property type="entry name" value="Transl_elong_KOW-like"/>
</dbReference>
<dbReference type="InterPro" id="IPR011897">
    <property type="entry name" value="Transl_elong_p-like_YeiP"/>
</dbReference>
<dbReference type="InterPro" id="IPR001059">
    <property type="entry name" value="Transl_elong_P/YeiP_cen"/>
</dbReference>
<dbReference type="InterPro" id="IPR013852">
    <property type="entry name" value="Transl_elong_P/YeiP_CS"/>
</dbReference>
<dbReference type="InterPro" id="IPR008991">
    <property type="entry name" value="Translation_prot_SH3-like_sf"/>
</dbReference>
<dbReference type="NCBIfam" id="NF001810">
    <property type="entry name" value="PRK00529.1"/>
    <property type="match status" value="1"/>
</dbReference>
<dbReference type="NCBIfam" id="NF003392">
    <property type="entry name" value="PRK04542.1"/>
    <property type="match status" value="1"/>
</dbReference>
<dbReference type="NCBIfam" id="TIGR02178">
    <property type="entry name" value="yeiP"/>
    <property type="match status" value="1"/>
</dbReference>
<dbReference type="PANTHER" id="PTHR30053">
    <property type="entry name" value="ELONGATION FACTOR P"/>
    <property type="match status" value="1"/>
</dbReference>
<dbReference type="PANTHER" id="PTHR30053:SF14">
    <property type="entry name" value="TRANSLATION ELONGATION FACTOR KOW-LIKE DOMAIN-CONTAINING PROTEIN"/>
    <property type="match status" value="1"/>
</dbReference>
<dbReference type="Pfam" id="PF01132">
    <property type="entry name" value="EFP"/>
    <property type="match status" value="1"/>
</dbReference>
<dbReference type="Pfam" id="PF08207">
    <property type="entry name" value="EFP_N"/>
    <property type="match status" value="1"/>
</dbReference>
<dbReference type="Pfam" id="PF09285">
    <property type="entry name" value="Elong-fact-P_C"/>
    <property type="match status" value="1"/>
</dbReference>
<dbReference type="PIRSF" id="PIRSF005901">
    <property type="entry name" value="EF-P"/>
    <property type="match status" value="1"/>
</dbReference>
<dbReference type="SMART" id="SM01185">
    <property type="entry name" value="EFP"/>
    <property type="match status" value="1"/>
</dbReference>
<dbReference type="SMART" id="SM00841">
    <property type="entry name" value="Elong-fact-P_C"/>
    <property type="match status" value="1"/>
</dbReference>
<dbReference type="SUPFAM" id="SSF50249">
    <property type="entry name" value="Nucleic acid-binding proteins"/>
    <property type="match status" value="2"/>
</dbReference>
<dbReference type="SUPFAM" id="SSF50104">
    <property type="entry name" value="Translation proteins SH3-like domain"/>
    <property type="match status" value="1"/>
</dbReference>
<dbReference type="PROSITE" id="PS01275">
    <property type="entry name" value="EFP"/>
    <property type="match status" value="1"/>
</dbReference>
<organism>
    <name type="scientific">Escherichia coli O81 (strain ED1a)</name>
    <dbReference type="NCBI Taxonomy" id="585397"/>
    <lineage>
        <taxon>Bacteria</taxon>
        <taxon>Pseudomonadati</taxon>
        <taxon>Pseudomonadota</taxon>
        <taxon>Gammaproteobacteria</taxon>
        <taxon>Enterobacterales</taxon>
        <taxon>Enterobacteriaceae</taxon>
        <taxon>Escherichia</taxon>
    </lineage>
</organism>